<protein>
    <recommendedName>
        <fullName>Structural protein p14.5</fullName>
    </recommendedName>
</protein>
<sequence length="122" mass="13899">MADFNSPIQYLKEDSRDRTSIGSLEYDENADTMIPSFAAGLEEFEPIPDFDPTTSTSLYSQLTHNMEKIAEEEDNNFLHDTREFTSLVPDEADNKPEDDEESGAKPKKKKHLFPKLSSHKSK</sequence>
<accession>P0C9Y7</accession>
<organism>
    <name type="scientific">African swine fever virus (isolate Warthog/Namibia/Wart80/1980)</name>
    <name type="common">ASFV</name>
    <dbReference type="NCBI Taxonomy" id="561444"/>
    <lineage>
        <taxon>Viruses</taxon>
        <taxon>Varidnaviria</taxon>
        <taxon>Bamfordvirae</taxon>
        <taxon>Nucleocytoviricota</taxon>
        <taxon>Pokkesviricetes</taxon>
        <taxon>Asfuvirales</taxon>
        <taxon>Asfarviridae</taxon>
        <taxon>Asfivirus</taxon>
        <taxon>African swine fever virus</taxon>
    </lineage>
</organism>
<organismHost>
    <name type="scientific">Ornithodoros</name>
    <name type="common">relapsing fever ticks</name>
    <dbReference type="NCBI Taxonomy" id="6937"/>
</organismHost>
<organismHost>
    <name type="scientific">Phacochoerus aethiopicus</name>
    <name type="common">Warthog</name>
    <dbReference type="NCBI Taxonomy" id="85517"/>
</organismHost>
<organismHost>
    <name type="scientific">Phacochoerus africanus</name>
    <name type="common">Warthog</name>
    <dbReference type="NCBI Taxonomy" id="41426"/>
</organismHost>
<organismHost>
    <name type="scientific">Potamochoerus larvatus</name>
    <name type="common">Bushpig</name>
    <dbReference type="NCBI Taxonomy" id="273792"/>
</organismHost>
<organismHost>
    <name type="scientific">Sus scrofa</name>
    <name type="common">Pig</name>
    <dbReference type="NCBI Taxonomy" id="9823"/>
</organismHost>
<evidence type="ECO:0000250" key="1">
    <source>
        <dbReference type="UniProtKB" id="Q65201"/>
    </source>
</evidence>
<evidence type="ECO:0000256" key="2">
    <source>
        <dbReference type="SAM" id="MobiDB-lite"/>
    </source>
</evidence>
<evidence type="ECO:0000305" key="3"/>
<gene>
    <name type="ordered locus">War-143</name>
</gene>
<keyword id="KW-0007">Acetylation</keyword>
<keyword id="KW-0238">DNA-binding</keyword>
<keyword id="KW-0945">Host-virus interaction</keyword>
<keyword id="KW-1090">Inhibition of host innate immune response by virus</keyword>
<keyword id="KW-1092">Inhibition of host IRF3 by virus</keyword>
<keyword id="KW-1113">Inhibition of host RLR pathway by virus</keyword>
<keyword id="KW-0426">Late protein</keyword>
<keyword id="KW-0899">Viral immunoevasion</keyword>
<keyword id="KW-1188">Viral release from host cell</keyword>
<keyword id="KW-0946">Virion</keyword>
<name>P14_ASFWA</name>
<feature type="initiator methionine" description="Removed" evidence="3">
    <location>
        <position position="1"/>
    </location>
</feature>
<feature type="chain" id="PRO_0000373400" description="Structural protein p14.5">
    <location>
        <begin position="2"/>
        <end position="122"/>
    </location>
</feature>
<feature type="region of interest" description="Disordered" evidence="2">
    <location>
        <begin position="1"/>
        <end position="27"/>
    </location>
</feature>
<feature type="region of interest" description="Disordered" evidence="2">
    <location>
        <begin position="73"/>
        <end position="122"/>
    </location>
</feature>
<feature type="compositionally biased region" description="Basic residues" evidence="2">
    <location>
        <begin position="105"/>
        <end position="122"/>
    </location>
</feature>
<feature type="modified residue" description="N-acetylalanine; by host" evidence="1">
    <location>
        <position position="2"/>
    </location>
</feature>
<comment type="function">
    <text evidence="1">Structural protein required for transport of intracellular particles from the assembly sites to the plasma membrane (By similarity). Binds to both ssDNA and dsDNA (By similarity). Suppressed the activation of the cGAS/STING pathway by interfering with the recruitment of IRF3 to TBK1, which in turn suppresses IRF3 phosphorylation, decreasing interferon production (By similarity).</text>
</comment>
<comment type="subunit">
    <text evidence="1">Interacts with the major capsid protein (By similarity). Interacts with host IRF3; this interaction interferes with the recruitment of IRF3 to TBK1 (By similarity).</text>
</comment>
<comment type="subcellular location">
    <subcellularLocation>
        <location evidence="1">Virion</location>
    </subcellularLocation>
    <text evidence="1">Localizes at the surface of the intracellular virion.</text>
</comment>
<comment type="induction">
    <text evidence="3">Expressed in the late phase of the viral replicative cycle.</text>
</comment>
<comment type="PTM">
    <text evidence="1">Acetylated.</text>
</comment>
<comment type="similarity">
    <text evidence="3">Belongs to the asfivirus structural protein p14.5 family.</text>
</comment>
<proteinExistence type="inferred from homology"/>
<reference key="1">
    <citation type="submission" date="2003-03" db="EMBL/GenBank/DDBJ databases">
        <title>African swine fever virus genomes.</title>
        <authorList>
            <person name="Kutish G.F."/>
            <person name="Rock D.L."/>
        </authorList>
    </citation>
    <scope>NUCLEOTIDE SEQUENCE [LARGE SCALE GENOMIC DNA]</scope>
</reference>
<dbReference type="EMBL" id="AY261366">
    <property type="status" value="NOT_ANNOTATED_CDS"/>
    <property type="molecule type" value="Genomic_DNA"/>
</dbReference>
<dbReference type="Proteomes" id="UP000000858">
    <property type="component" value="Segment"/>
</dbReference>
<dbReference type="GO" id="GO:0044423">
    <property type="term" value="C:virion component"/>
    <property type="evidence" value="ECO:0007669"/>
    <property type="project" value="UniProtKB-KW"/>
</dbReference>
<dbReference type="GO" id="GO:0003677">
    <property type="term" value="F:DNA binding"/>
    <property type="evidence" value="ECO:0007669"/>
    <property type="project" value="UniProtKB-KW"/>
</dbReference>
<dbReference type="GO" id="GO:0039548">
    <property type="term" value="P:symbiont-mediated suppression of host cytoplasmic pattern recognition receptor signaling pathway via inhibition of IRF3 activity"/>
    <property type="evidence" value="ECO:0007669"/>
    <property type="project" value="UniProtKB-KW"/>
</dbReference>